<reference key="1">
    <citation type="journal article" date="2007" name="PLoS ONE">
        <title>The complete genome sequence and analysis of the Epsilonproteobacterium Arcobacter butzleri.</title>
        <authorList>
            <person name="Miller W.G."/>
            <person name="Parker C.T."/>
            <person name="Rubenfield M."/>
            <person name="Mendz G.L."/>
            <person name="Woesten M.M.S.M."/>
            <person name="Ussery D.W."/>
            <person name="Stolz J.F."/>
            <person name="Binnewies T.T."/>
            <person name="Hallin P.F."/>
            <person name="Wang G."/>
            <person name="Malek J.A."/>
            <person name="Rogosin A."/>
            <person name="Stanker L.H."/>
            <person name="Mandrell R.E."/>
        </authorList>
    </citation>
    <scope>NUCLEOTIDE SEQUENCE [LARGE SCALE GENOMIC DNA]</scope>
    <source>
        <strain>RM4018</strain>
    </source>
</reference>
<gene>
    <name evidence="1" type="primary">ndk</name>
    <name type="ordered locus">Abu_0291</name>
</gene>
<protein>
    <recommendedName>
        <fullName evidence="1">Nucleoside diphosphate kinase</fullName>
        <shortName evidence="1">NDK</shortName>
        <shortName evidence="1">NDP kinase</shortName>
        <ecNumber evidence="1">2.7.4.6</ecNumber>
    </recommendedName>
    <alternativeName>
        <fullName evidence="1">Nucleoside-2-P kinase</fullName>
    </alternativeName>
</protein>
<organism>
    <name type="scientific">Aliarcobacter butzleri (strain RM4018)</name>
    <name type="common">Arcobacter butzleri</name>
    <dbReference type="NCBI Taxonomy" id="367737"/>
    <lineage>
        <taxon>Bacteria</taxon>
        <taxon>Pseudomonadati</taxon>
        <taxon>Campylobacterota</taxon>
        <taxon>Epsilonproteobacteria</taxon>
        <taxon>Campylobacterales</taxon>
        <taxon>Arcobacteraceae</taxon>
        <taxon>Aliarcobacter</taxon>
    </lineage>
</organism>
<proteinExistence type="inferred from homology"/>
<sequence>MEQTLSIIKPDAVAKNVVGKILDRFESAGLKIAATKKLQLSQADAEAFYAVHAARPFFKDLVEFMISGPVVVSVLEGENAMAKNRELMGATNPKEAAAGTIRADFADSIDANAVHGSDSLENAKNEIAFFFAQREIC</sequence>
<keyword id="KW-0067">ATP-binding</keyword>
<keyword id="KW-0963">Cytoplasm</keyword>
<keyword id="KW-0418">Kinase</keyword>
<keyword id="KW-0460">Magnesium</keyword>
<keyword id="KW-0479">Metal-binding</keyword>
<keyword id="KW-0546">Nucleotide metabolism</keyword>
<keyword id="KW-0547">Nucleotide-binding</keyword>
<keyword id="KW-0597">Phosphoprotein</keyword>
<keyword id="KW-1185">Reference proteome</keyword>
<keyword id="KW-0808">Transferase</keyword>
<name>NDK_ALIB4</name>
<evidence type="ECO:0000255" key="1">
    <source>
        <dbReference type="HAMAP-Rule" id="MF_00451"/>
    </source>
</evidence>
<feature type="chain" id="PRO_1000060279" description="Nucleoside diphosphate kinase">
    <location>
        <begin position="1"/>
        <end position="137"/>
    </location>
</feature>
<feature type="active site" description="Pros-phosphohistidine intermediate" evidence="1">
    <location>
        <position position="115"/>
    </location>
</feature>
<feature type="binding site" evidence="1">
    <location>
        <position position="9"/>
    </location>
    <ligand>
        <name>ATP</name>
        <dbReference type="ChEBI" id="CHEBI:30616"/>
    </ligand>
</feature>
<feature type="binding site" evidence="1">
    <location>
        <position position="57"/>
    </location>
    <ligand>
        <name>ATP</name>
        <dbReference type="ChEBI" id="CHEBI:30616"/>
    </ligand>
</feature>
<feature type="binding site" evidence="1">
    <location>
        <position position="85"/>
    </location>
    <ligand>
        <name>ATP</name>
        <dbReference type="ChEBI" id="CHEBI:30616"/>
    </ligand>
</feature>
<feature type="binding site" evidence="1">
    <location>
        <position position="91"/>
    </location>
    <ligand>
        <name>ATP</name>
        <dbReference type="ChEBI" id="CHEBI:30616"/>
    </ligand>
</feature>
<feature type="binding site" evidence="1">
    <location>
        <position position="102"/>
    </location>
    <ligand>
        <name>ATP</name>
        <dbReference type="ChEBI" id="CHEBI:30616"/>
    </ligand>
</feature>
<feature type="binding site" evidence="1">
    <location>
        <position position="112"/>
    </location>
    <ligand>
        <name>ATP</name>
        <dbReference type="ChEBI" id="CHEBI:30616"/>
    </ligand>
</feature>
<comment type="function">
    <text evidence="1">Major role in the synthesis of nucleoside triphosphates other than ATP. The ATP gamma phosphate is transferred to the NDP beta phosphate via a ping-pong mechanism, using a phosphorylated active-site intermediate.</text>
</comment>
<comment type="catalytic activity">
    <reaction evidence="1">
        <text>a 2'-deoxyribonucleoside 5'-diphosphate + ATP = a 2'-deoxyribonucleoside 5'-triphosphate + ADP</text>
        <dbReference type="Rhea" id="RHEA:44640"/>
        <dbReference type="ChEBI" id="CHEBI:30616"/>
        <dbReference type="ChEBI" id="CHEBI:61560"/>
        <dbReference type="ChEBI" id="CHEBI:73316"/>
        <dbReference type="ChEBI" id="CHEBI:456216"/>
        <dbReference type="EC" id="2.7.4.6"/>
    </reaction>
</comment>
<comment type="catalytic activity">
    <reaction evidence="1">
        <text>a ribonucleoside 5'-diphosphate + ATP = a ribonucleoside 5'-triphosphate + ADP</text>
        <dbReference type="Rhea" id="RHEA:18113"/>
        <dbReference type="ChEBI" id="CHEBI:30616"/>
        <dbReference type="ChEBI" id="CHEBI:57930"/>
        <dbReference type="ChEBI" id="CHEBI:61557"/>
        <dbReference type="ChEBI" id="CHEBI:456216"/>
        <dbReference type="EC" id="2.7.4.6"/>
    </reaction>
</comment>
<comment type="cofactor">
    <cofactor evidence="1">
        <name>Mg(2+)</name>
        <dbReference type="ChEBI" id="CHEBI:18420"/>
    </cofactor>
</comment>
<comment type="subunit">
    <text evidence="1">Homotetramer.</text>
</comment>
<comment type="subcellular location">
    <subcellularLocation>
        <location evidence="1">Cytoplasm</location>
    </subcellularLocation>
</comment>
<comment type="similarity">
    <text evidence="1">Belongs to the NDK family.</text>
</comment>
<accession>A8ERJ2</accession>
<dbReference type="EC" id="2.7.4.6" evidence="1"/>
<dbReference type="EMBL" id="CP000361">
    <property type="protein sequence ID" value="ABV66566.1"/>
    <property type="molecule type" value="Genomic_DNA"/>
</dbReference>
<dbReference type="RefSeq" id="WP_004510347.1">
    <property type="nucleotide sequence ID" value="NC_009850.1"/>
</dbReference>
<dbReference type="SMR" id="A8ERJ2"/>
<dbReference type="STRING" id="367737.Abu_0291"/>
<dbReference type="GeneID" id="24304762"/>
<dbReference type="KEGG" id="abu:Abu_0291"/>
<dbReference type="eggNOG" id="COG0105">
    <property type="taxonomic scope" value="Bacteria"/>
</dbReference>
<dbReference type="HOGENOM" id="CLU_060216_8_1_7"/>
<dbReference type="Proteomes" id="UP000001136">
    <property type="component" value="Chromosome"/>
</dbReference>
<dbReference type="GO" id="GO:0005737">
    <property type="term" value="C:cytoplasm"/>
    <property type="evidence" value="ECO:0007669"/>
    <property type="project" value="UniProtKB-SubCell"/>
</dbReference>
<dbReference type="GO" id="GO:0005524">
    <property type="term" value="F:ATP binding"/>
    <property type="evidence" value="ECO:0007669"/>
    <property type="project" value="UniProtKB-UniRule"/>
</dbReference>
<dbReference type="GO" id="GO:0046872">
    <property type="term" value="F:metal ion binding"/>
    <property type="evidence" value="ECO:0007669"/>
    <property type="project" value="UniProtKB-KW"/>
</dbReference>
<dbReference type="GO" id="GO:0004550">
    <property type="term" value="F:nucleoside diphosphate kinase activity"/>
    <property type="evidence" value="ECO:0007669"/>
    <property type="project" value="UniProtKB-UniRule"/>
</dbReference>
<dbReference type="GO" id="GO:0006241">
    <property type="term" value="P:CTP biosynthetic process"/>
    <property type="evidence" value="ECO:0007669"/>
    <property type="project" value="UniProtKB-UniRule"/>
</dbReference>
<dbReference type="GO" id="GO:0006183">
    <property type="term" value="P:GTP biosynthetic process"/>
    <property type="evidence" value="ECO:0007669"/>
    <property type="project" value="UniProtKB-UniRule"/>
</dbReference>
<dbReference type="GO" id="GO:0006228">
    <property type="term" value="P:UTP biosynthetic process"/>
    <property type="evidence" value="ECO:0007669"/>
    <property type="project" value="UniProtKB-UniRule"/>
</dbReference>
<dbReference type="CDD" id="cd04413">
    <property type="entry name" value="NDPk_I"/>
    <property type="match status" value="1"/>
</dbReference>
<dbReference type="FunFam" id="3.30.70.141:FF:000001">
    <property type="entry name" value="Nucleoside diphosphate kinase"/>
    <property type="match status" value="1"/>
</dbReference>
<dbReference type="Gene3D" id="3.30.70.141">
    <property type="entry name" value="Nucleoside diphosphate kinase-like domain"/>
    <property type="match status" value="1"/>
</dbReference>
<dbReference type="HAMAP" id="MF_00451">
    <property type="entry name" value="NDP_kinase"/>
    <property type="match status" value="1"/>
</dbReference>
<dbReference type="InterPro" id="IPR034907">
    <property type="entry name" value="NDK-like_dom"/>
</dbReference>
<dbReference type="InterPro" id="IPR036850">
    <property type="entry name" value="NDK-like_dom_sf"/>
</dbReference>
<dbReference type="InterPro" id="IPR001564">
    <property type="entry name" value="Nucleoside_diP_kinase"/>
</dbReference>
<dbReference type="InterPro" id="IPR023005">
    <property type="entry name" value="Nucleoside_diP_kinase_AS"/>
</dbReference>
<dbReference type="NCBIfam" id="NF001908">
    <property type="entry name" value="PRK00668.1"/>
    <property type="match status" value="1"/>
</dbReference>
<dbReference type="PANTHER" id="PTHR46161">
    <property type="entry name" value="NUCLEOSIDE DIPHOSPHATE KINASE"/>
    <property type="match status" value="1"/>
</dbReference>
<dbReference type="PANTHER" id="PTHR46161:SF3">
    <property type="entry name" value="NUCLEOSIDE DIPHOSPHATE KINASE DDB_G0292928-RELATED"/>
    <property type="match status" value="1"/>
</dbReference>
<dbReference type="Pfam" id="PF00334">
    <property type="entry name" value="NDK"/>
    <property type="match status" value="1"/>
</dbReference>
<dbReference type="PRINTS" id="PR01243">
    <property type="entry name" value="NUCDPKINASE"/>
</dbReference>
<dbReference type="SMART" id="SM00562">
    <property type="entry name" value="NDK"/>
    <property type="match status" value="1"/>
</dbReference>
<dbReference type="SUPFAM" id="SSF54919">
    <property type="entry name" value="Nucleoside diphosphate kinase, NDK"/>
    <property type="match status" value="1"/>
</dbReference>
<dbReference type="PROSITE" id="PS00469">
    <property type="entry name" value="NDPK"/>
    <property type="match status" value="1"/>
</dbReference>
<dbReference type="PROSITE" id="PS51374">
    <property type="entry name" value="NDPK_LIKE"/>
    <property type="match status" value="1"/>
</dbReference>